<organism>
    <name type="scientific">Danio rerio</name>
    <name type="common">Zebrafish</name>
    <name type="synonym">Brachydanio rerio</name>
    <dbReference type="NCBI Taxonomy" id="7955"/>
    <lineage>
        <taxon>Eukaryota</taxon>
        <taxon>Metazoa</taxon>
        <taxon>Chordata</taxon>
        <taxon>Craniata</taxon>
        <taxon>Vertebrata</taxon>
        <taxon>Euteleostomi</taxon>
        <taxon>Actinopterygii</taxon>
        <taxon>Neopterygii</taxon>
        <taxon>Teleostei</taxon>
        <taxon>Ostariophysi</taxon>
        <taxon>Cypriniformes</taxon>
        <taxon>Danionidae</taxon>
        <taxon>Danioninae</taxon>
        <taxon>Danio</taxon>
    </lineage>
</organism>
<accession>Q0P424</accession>
<accession>A7MCM9</accession>
<accession>A8DZD8</accession>
<proteinExistence type="evidence at transcript level"/>
<protein>
    <recommendedName>
        <fullName>Elongator complex protein 6</fullName>
    </recommendedName>
    <alternativeName>
        <fullName>Protein TMEM103</fullName>
    </alternativeName>
</protein>
<reference key="1">
    <citation type="journal article" date="2013" name="Nature">
        <title>The zebrafish reference genome sequence and its relationship to the human genome.</title>
        <authorList>
            <person name="Howe K."/>
            <person name="Clark M.D."/>
            <person name="Torroja C.F."/>
            <person name="Torrance J."/>
            <person name="Berthelot C."/>
            <person name="Muffato M."/>
            <person name="Collins J.E."/>
            <person name="Humphray S."/>
            <person name="McLaren K."/>
            <person name="Matthews L."/>
            <person name="McLaren S."/>
            <person name="Sealy I."/>
            <person name="Caccamo M."/>
            <person name="Churcher C."/>
            <person name="Scott C."/>
            <person name="Barrett J.C."/>
            <person name="Koch R."/>
            <person name="Rauch G.J."/>
            <person name="White S."/>
            <person name="Chow W."/>
            <person name="Kilian B."/>
            <person name="Quintais L.T."/>
            <person name="Guerra-Assuncao J.A."/>
            <person name="Zhou Y."/>
            <person name="Gu Y."/>
            <person name="Yen J."/>
            <person name="Vogel J.H."/>
            <person name="Eyre T."/>
            <person name="Redmond S."/>
            <person name="Banerjee R."/>
            <person name="Chi J."/>
            <person name="Fu B."/>
            <person name="Langley E."/>
            <person name="Maguire S.F."/>
            <person name="Laird G.K."/>
            <person name="Lloyd D."/>
            <person name="Kenyon E."/>
            <person name="Donaldson S."/>
            <person name="Sehra H."/>
            <person name="Almeida-King J."/>
            <person name="Loveland J."/>
            <person name="Trevanion S."/>
            <person name="Jones M."/>
            <person name="Quail M."/>
            <person name="Willey D."/>
            <person name="Hunt A."/>
            <person name="Burton J."/>
            <person name="Sims S."/>
            <person name="McLay K."/>
            <person name="Plumb B."/>
            <person name="Davis J."/>
            <person name="Clee C."/>
            <person name="Oliver K."/>
            <person name="Clark R."/>
            <person name="Riddle C."/>
            <person name="Elliot D."/>
            <person name="Threadgold G."/>
            <person name="Harden G."/>
            <person name="Ware D."/>
            <person name="Begum S."/>
            <person name="Mortimore B."/>
            <person name="Kerry G."/>
            <person name="Heath P."/>
            <person name="Phillimore B."/>
            <person name="Tracey A."/>
            <person name="Corby N."/>
            <person name="Dunn M."/>
            <person name="Johnson C."/>
            <person name="Wood J."/>
            <person name="Clark S."/>
            <person name="Pelan S."/>
            <person name="Griffiths G."/>
            <person name="Smith M."/>
            <person name="Glithero R."/>
            <person name="Howden P."/>
            <person name="Barker N."/>
            <person name="Lloyd C."/>
            <person name="Stevens C."/>
            <person name="Harley J."/>
            <person name="Holt K."/>
            <person name="Panagiotidis G."/>
            <person name="Lovell J."/>
            <person name="Beasley H."/>
            <person name="Henderson C."/>
            <person name="Gordon D."/>
            <person name="Auger K."/>
            <person name="Wright D."/>
            <person name="Collins J."/>
            <person name="Raisen C."/>
            <person name="Dyer L."/>
            <person name="Leung K."/>
            <person name="Robertson L."/>
            <person name="Ambridge K."/>
            <person name="Leongamornlert D."/>
            <person name="McGuire S."/>
            <person name="Gilderthorp R."/>
            <person name="Griffiths C."/>
            <person name="Manthravadi D."/>
            <person name="Nichol S."/>
            <person name="Barker G."/>
            <person name="Whitehead S."/>
            <person name="Kay M."/>
            <person name="Brown J."/>
            <person name="Murnane C."/>
            <person name="Gray E."/>
            <person name="Humphries M."/>
            <person name="Sycamore N."/>
            <person name="Barker D."/>
            <person name="Saunders D."/>
            <person name="Wallis J."/>
            <person name="Babbage A."/>
            <person name="Hammond S."/>
            <person name="Mashreghi-Mohammadi M."/>
            <person name="Barr L."/>
            <person name="Martin S."/>
            <person name="Wray P."/>
            <person name="Ellington A."/>
            <person name="Matthews N."/>
            <person name="Ellwood M."/>
            <person name="Woodmansey R."/>
            <person name="Clark G."/>
            <person name="Cooper J."/>
            <person name="Tromans A."/>
            <person name="Grafham D."/>
            <person name="Skuce C."/>
            <person name="Pandian R."/>
            <person name="Andrews R."/>
            <person name="Harrison E."/>
            <person name="Kimberley A."/>
            <person name="Garnett J."/>
            <person name="Fosker N."/>
            <person name="Hall R."/>
            <person name="Garner P."/>
            <person name="Kelly D."/>
            <person name="Bird C."/>
            <person name="Palmer S."/>
            <person name="Gehring I."/>
            <person name="Berger A."/>
            <person name="Dooley C.M."/>
            <person name="Ersan-Urun Z."/>
            <person name="Eser C."/>
            <person name="Geiger H."/>
            <person name="Geisler M."/>
            <person name="Karotki L."/>
            <person name="Kirn A."/>
            <person name="Konantz J."/>
            <person name="Konantz M."/>
            <person name="Oberlander M."/>
            <person name="Rudolph-Geiger S."/>
            <person name="Teucke M."/>
            <person name="Lanz C."/>
            <person name="Raddatz G."/>
            <person name="Osoegawa K."/>
            <person name="Zhu B."/>
            <person name="Rapp A."/>
            <person name="Widaa S."/>
            <person name="Langford C."/>
            <person name="Yang F."/>
            <person name="Schuster S.C."/>
            <person name="Carter N.P."/>
            <person name="Harrow J."/>
            <person name="Ning Z."/>
            <person name="Herrero J."/>
            <person name="Searle S.M."/>
            <person name="Enright A."/>
            <person name="Geisler R."/>
            <person name="Plasterk R.H."/>
            <person name="Lee C."/>
            <person name="Westerfield M."/>
            <person name="de Jong P.J."/>
            <person name="Zon L.I."/>
            <person name="Postlethwait J.H."/>
            <person name="Nusslein-Volhard C."/>
            <person name="Hubbard T.J."/>
            <person name="Roest Crollius H."/>
            <person name="Rogers J."/>
            <person name="Stemple D.L."/>
        </authorList>
    </citation>
    <scope>NUCLEOTIDE SEQUENCE [LARGE SCALE GENOMIC DNA]</scope>
    <source>
        <strain>Tuebingen</strain>
    </source>
</reference>
<reference key="2">
    <citation type="submission" date="2007-08" db="EMBL/GenBank/DDBJ databases">
        <authorList>
            <consortium name="NIH - Zebrafish Gene Collection (ZGC) project"/>
        </authorList>
    </citation>
    <scope>NUCLEOTIDE SEQUENCE [LARGE SCALE MRNA]</scope>
    <source>
        <strain>AB</strain>
        <tissue>Embryo</tissue>
        <tissue>Intestine</tissue>
    </source>
</reference>
<keyword id="KW-0963">Cytoplasm</keyword>
<keyword id="KW-0539">Nucleus</keyword>
<keyword id="KW-1185">Reference proteome</keyword>
<keyword id="KW-0819">tRNA processing</keyword>
<evidence type="ECO:0000250" key="1">
    <source>
        <dbReference type="UniProtKB" id="Q0PNE2"/>
    </source>
</evidence>
<evidence type="ECO:0000305" key="2"/>
<feature type="chain" id="PRO_0000274362" description="Elongator complex protein 6">
    <location>
        <begin position="1"/>
        <end position="264"/>
    </location>
</feature>
<feature type="sequence conflict" description="In Ref. 2; AAI22320." evidence="2" ref="2">
    <original>E</original>
    <variation>K</variation>
    <location>
        <position position="211"/>
    </location>
</feature>
<dbReference type="EMBL" id="AL929190">
    <property type="protein sequence ID" value="CAP09601.1"/>
    <property type="status" value="ALT_SEQ"/>
    <property type="molecule type" value="Genomic_DNA"/>
</dbReference>
<dbReference type="EMBL" id="BC122319">
    <property type="protein sequence ID" value="AAI22320.1"/>
    <property type="molecule type" value="mRNA"/>
</dbReference>
<dbReference type="EMBL" id="BC152243">
    <property type="protein sequence ID" value="AAI52244.1"/>
    <property type="molecule type" value="mRNA"/>
</dbReference>
<dbReference type="RefSeq" id="NP_001096612.1">
    <property type="nucleotide sequence ID" value="NM_001103142.1"/>
</dbReference>
<dbReference type="SMR" id="Q0P424"/>
<dbReference type="FunCoup" id="Q0P424">
    <property type="interactions" value="1280"/>
</dbReference>
<dbReference type="STRING" id="7955.ENSDARP00000145763"/>
<dbReference type="PaxDb" id="7955-ENSDARP00000079599"/>
<dbReference type="Ensembl" id="ENSDART00000085164">
    <property type="protein sequence ID" value="ENSDARP00000079599"/>
    <property type="gene ID" value="ENSDARG00000115612"/>
</dbReference>
<dbReference type="Ensembl" id="ENSDART00000193517">
    <property type="protein sequence ID" value="ENSDARP00000145763"/>
    <property type="gene ID" value="ENSDARG00000060445"/>
</dbReference>
<dbReference type="GeneID" id="751679"/>
<dbReference type="KEGG" id="dre:751679"/>
<dbReference type="AGR" id="ZFIN:ZDB-GENE-060825-249"/>
<dbReference type="CTD" id="54859"/>
<dbReference type="ZFIN" id="ZDB-GENE-060825-249">
    <property type="gene designation" value="elp6"/>
</dbReference>
<dbReference type="eggNOG" id="KOG4723">
    <property type="taxonomic scope" value="Eukaryota"/>
</dbReference>
<dbReference type="InParanoid" id="Q0P424"/>
<dbReference type="OMA" id="MFTELNS"/>
<dbReference type="OrthoDB" id="9995306at2759"/>
<dbReference type="PhylomeDB" id="Q0P424"/>
<dbReference type="TreeFam" id="TF331346"/>
<dbReference type="UniPathway" id="UPA00988"/>
<dbReference type="PRO" id="PR:Q0P424"/>
<dbReference type="Proteomes" id="UP000000437">
    <property type="component" value="Alternate scaffold 16"/>
</dbReference>
<dbReference type="Proteomes" id="UP000000437">
    <property type="component" value="Chromosome 16"/>
</dbReference>
<dbReference type="Bgee" id="ENSDARG00000060445">
    <property type="expression patterns" value="Expressed in swim bladder and 20 other cell types or tissues"/>
</dbReference>
<dbReference type="ExpressionAtlas" id="Q0P424">
    <property type="expression patterns" value="baseline and differential"/>
</dbReference>
<dbReference type="GO" id="GO:0005737">
    <property type="term" value="C:cytoplasm"/>
    <property type="evidence" value="ECO:0007669"/>
    <property type="project" value="UniProtKB-SubCell"/>
</dbReference>
<dbReference type="GO" id="GO:0033588">
    <property type="term" value="C:elongator holoenzyme complex"/>
    <property type="evidence" value="ECO:0000250"/>
    <property type="project" value="UniProtKB"/>
</dbReference>
<dbReference type="GO" id="GO:0005634">
    <property type="term" value="C:nucleus"/>
    <property type="evidence" value="ECO:0007669"/>
    <property type="project" value="UniProtKB-SubCell"/>
</dbReference>
<dbReference type="GO" id="GO:0030335">
    <property type="term" value="P:positive regulation of cell migration"/>
    <property type="evidence" value="ECO:0000250"/>
    <property type="project" value="UniProtKB"/>
</dbReference>
<dbReference type="GO" id="GO:0002098">
    <property type="term" value="P:tRNA wobble uridine modification"/>
    <property type="evidence" value="ECO:0007669"/>
    <property type="project" value="InterPro"/>
</dbReference>
<dbReference type="CDD" id="cd19495">
    <property type="entry name" value="Elp6"/>
    <property type="match status" value="1"/>
</dbReference>
<dbReference type="FunFam" id="3.40.50.300:FF:001078">
    <property type="entry name" value="Elongator acetyltransferase complex subunit 6"/>
    <property type="match status" value="1"/>
</dbReference>
<dbReference type="Gene3D" id="3.40.50.300">
    <property type="entry name" value="P-loop containing nucleotide triphosphate hydrolases"/>
    <property type="match status" value="1"/>
</dbReference>
<dbReference type="InterPro" id="IPR018627">
    <property type="entry name" value="ELP6"/>
</dbReference>
<dbReference type="InterPro" id="IPR027417">
    <property type="entry name" value="P-loop_NTPase"/>
</dbReference>
<dbReference type="PANTHER" id="PTHR16184">
    <property type="entry name" value="ELONGATOR COMPLEX PROTEIN 6"/>
    <property type="match status" value="1"/>
</dbReference>
<dbReference type="PANTHER" id="PTHR16184:SF6">
    <property type="entry name" value="ELONGATOR COMPLEX PROTEIN 6"/>
    <property type="match status" value="1"/>
</dbReference>
<dbReference type="Pfam" id="PF09807">
    <property type="entry name" value="ELP6"/>
    <property type="match status" value="1"/>
</dbReference>
<name>ELP6_DANRE</name>
<comment type="function">
    <text evidence="1">Component of the elongator complex which is required for multiple tRNA modifications, including mcm5U (5-methoxycarbonylmethyl uridine), mcm5s2U (5-methoxycarbonylmethyl-2-thiouridine), and ncm5U (5-carbamoylmethyl uridine) (By similarity). The elongator complex catalyzes formation of carboxymethyluridine in the wobble base at position 34 in tRNAs (By similarity).</text>
</comment>
<comment type="pathway">
    <text evidence="1">tRNA modification; 5-methoxycarbonylmethyl-2-thiouridine-tRNA biosynthesis.</text>
</comment>
<comment type="subunit">
    <text evidence="1">Component of the elongator complex.</text>
</comment>
<comment type="subcellular location">
    <subcellularLocation>
        <location evidence="1">Cytoplasm</location>
    </subcellularLocation>
    <subcellularLocation>
        <location evidence="1">Nucleus</location>
    </subcellularLocation>
    <text evidence="1">Concentrates in the nucleus upon insulin stimulation.</text>
</comment>
<comment type="similarity">
    <text evidence="2">Belongs to the ELP6 family.</text>
</comment>
<comment type="caution">
    <text evidence="1">The elongator complex was originally thought to play a role in transcription elongation. However, it is no longer thought to play a direct role in this process and its primary function is thought to be in tRNA modification.</text>
</comment>
<comment type="sequence caution" evidence="2">
    <conflict type="erroneous gene model prediction">
        <sequence resource="EMBL-CDS" id="CAP09601"/>
    </conflict>
</comment>
<sequence length="264" mass="29240">MFPELNSLLNASPDTFKPGDFILLSDRQADASFLIHHYLSFYLRAGCKVCFLGLVQSFSHYSAVGQRLGVSLTQAREKGQLVFLEGLKDSIGAILKEDTSEGTQALSYLRSPRAGLEGLFRFVESSLCQSGDDGPPVLIIDDLSVLLSLGVSAGAILDFTLYCRATVCSELQGNMVILVRCEEEDADDDEEGLNLLQRGLVHQCHLALHVEGLPTGYCRDIHGQMEVWWRQGENDAYNQRKIFQFKVHDKGASFFTRGTSRAVL</sequence>
<gene>
    <name type="primary">elp6</name>
    <name type="synonym">tmem103</name>
    <name type="ORF">si:dkey-77n11.4</name>
    <name type="ORF">zgc:153530</name>
</gene>